<name>CP250_TOXGM</name>
<comment type="function">
    <text evidence="2 3">Part of the centrosome inner core complex (PubMed:25734885, PubMed:30865554). Required for the linking of centrosomal inner and outer cores (PubMed:30865554).</text>
</comment>
<comment type="subcellular location">
    <subcellularLocation>
        <location evidence="2 3">Cytoplasm</location>
        <location evidence="2 3">Cytoskeleton</location>
        <location evidence="2 3">Microtubule organizing center</location>
        <location evidence="2 3">Centrosome</location>
    </subcellularLocation>
    <text evidence="3">During the G1 phase of the cell cycle, localizes to centrosomal inner core (PubMed:30865554). During cytokinesis, association with outer core foci is also observed (PubMed:30865554).</text>
</comment>
<comment type="PTM">
    <text evidence="3">Proteolytically cleaved; only the full-length form localizes to the inner core, while processed version also localizes to the outer core during the onset of cell division.</text>
</comment>
<comment type="disruption phenotype">
    <text evidence="3">Conditional knockdown results in parasite inability to form plaques, indicating an essential role for parasite survival (PubMed:30865554). Formation of anuclear parasites due to the defects in the nucleus partitioning to the daughter cells (PubMed:30865554). Accumulation of multiple CEN1 foci within a single cell boundary (PubMed:30865554). Detachment of the inner core from the outer core (PubMed:30865554). Splitting outer core into two foci (PubMed:30865554). Stray inner core foci (PubMed:30865554). Kinetochore complex and spindle microtubules are detached from the centrosomal outer core (PubMed:30865554). Disconnection between inner and outer cores due to CEP250 depletion does not affect their functions (PubMed:30865554).</text>
</comment>
<reference evidence="8" key="1">
    <citation type="submission" date="2013-04" db="EMBL/GenBank/DDBJ databases">
        <authorList>
            <person name="Sibley D."/>
            <person name="Venepally P."/>
            <person name="Karamycheva S."/>
            <person name="Hadjithomas M."/>
            <person name="Khan A."/>
            <person name="Brunk B."/>
            <person name="Roos D."/>
            <person name="Caler E."/>
            <person name="Lorenzi H."/>
        </authorList>
    </citation>
    <scope>NUCLEOTIDE SEQUENCE [LARGE SCALE GENOMIC DNA]</scope>
    <source>
        <strain evidence="8">ATCC 50611 / Me49</strain>
    </source>
</reference>
<reference key="2">
    <citation type="journal article" date="2015" name="PLoS Biol.">
        <title>A novel bipartite centrosome coordinates the apicomplexan cell cycle.</title>
        <authorList>
            <person name="Suvorova E.S."/>
            <person name="Francia M."/>
            <person name="Striepen B."/>
            <person name="White M.W."/>
        </authorList>
    </citation>
    <scope>FUNCTION</scope>
    <scope>SUBCELLULAR LOCATION</scope>
</reference>
<reference evidence="6" key="3">
    <citation type="journal article" date="2019" name="Mol. Biol. Cell">
        <title>TgCep250 is dynamically processed through the division cycle and is essential for structural integrity of the Toxoplasma centrosome.</title>
        <authorList>
            <person name="Chen C.T."/>
            <person name="Gubbels M.J."/>
        </authorList>
    </citation>
    <scope>FUNCTION</scope>
    <scope>SUBCELLULAR LOCATION</scope>
    <scope>PROTEOLYTIC CLEAVAGE</scope>
    <scope>DISRUPTION PHENOTYPE</scope>
</reference>
<dbReference type="EMBL" id="KE138823">
    <property type="protein sequence ID" value="EPT31185.1"/>
    <property type="molecule type" value="Genomic_DNA"/>
</dbReference>
<dbReference type="RefSeq" id="XP_018637862.1">
    <property type="nucleotide sequence ID" value="XM_018779578.1"/>
</dbReference>
<dbReference type="EnsemblProtists" id="TGME49_212880-t26_1">
    <property type="protein sequence ID" value="TGME49_212880-t26_1"/>
    <property type="gene ID" value="TGME49_212880"/>
</dbReference>
<dbReference type="GeneID" id="7893619"/>
<dbReference type="KEGG" id="tgo:TGME49_212880"/>
<dbReference type="VEuPathDB" id="ToxoDB:TGME49_212880"/>
<dbReference type="OrthoDB" id="207963at2759"/>
<dbReference type="Proteomes" id="UP000001529">
    <property type="component" value="Chromosome V"/>
</dbReference>
<dbReference type="PANTHER" id="PTHR23159">
    <property type="entry name" value="CENTROSOMAL PROTEIN 2"/>
    <property type="match status" value="1"/>
</dbReference>
<dbReference type="PANTHER" id="PTHR23159:SF31">
    <property type="entry name" value="CENTROSOME-ASSOCIATED PROTEIN CEP250 ISOFORM X1"/>
    <property type="match status" value="1"/>
</dbReference>
<organism evidence="8">
    <name type="scientific">Toxoplasma gondii (strain ATCC 50611 / Me49)</name>
    <dbReference type="NCBI Taxonomy" id="508771"/>
    <lineage>
        <taxon>Eukaryota</taxon>
        <taxon>Sar</taxon>
        <taxon>Alveolata</taxon>
        <taxon>Apicomplexa</taxon>
        <taxon>Conoidasida</taxon>
        <taxon>Coccidia</taxon>
        <taxon>Eucoccidiorida</taxon>
        <taxon>Eimeriorina</taxon>
        <taxon>Sarcocystidae</taxon>
        <taxon>Toxoplasma</taxon>
    </lineage>
</organism>
<sequence>MVTQFHPVRPPVRATVTAVSSPAFSPPSSIPSDGLPGRLSVPETSRPFDPSVSDFALSGRSQAAVDADSGVPERHPDAARMAYRAEQSTGDYGSSSAYALARERRRQLRGRSRPASGEGRGTILRNALPRASSCTPPVLSSGSVPQSAQQRPAASLVSWKAGRFSGNVSRRCVACSAGDQDRVASDSRGDAALHSAALHRPASVSPQRTRAATGAKAVAFPLDAPDAGGPGLCTPQTGSGLEVSGHGKRRLSFQQDFTCGIERTLLPHLALPSVDVSSRGFPGRETTVWQDQAVGGRSDEAEEMDLNSGAGVTDRFYVSPQKWRCSQAAARTASAPRSVTTAGRGTSLASSVSESQSQLLPASPGASSVAACTPEEDALRALQREQQQDLFAALLRSRQARLATTPGASDVWTEERNLQRGEKEGALRPPHPSSAADSGVSTGDRLEGGFPKTDAPRTAQTPGRAFFDVAAEQVVFYQRQAELFRAKYEDAERRCAERDAAVHERDVKIQFLQAQIAALTHQVQTLQHPERGNVTDRAEEKALPQLVDPPAEETEEAVVVSKAFHEAQLARAREETKTLRQKIAALQQDIRPAVVSPSQPSTRPSSETAVTRGDRETANDKRHDTRSEDERTRELTERLQAALAVNESLREELLEARQQLSLLRASSGTPSAFPVAESPQTGALKASFSSSPALSGPGAAGAFSAPDAPKLEVSFLPNVSRASDSSRRATSLSNLPSVEGCRSREKSPEDLLLSSSSGGFSRPHNLALRRELAVRRRLNAQRKQRCLELEQQVHVLASSLEVAREQARAAESVGLSLSQQLQTQTEEARCLQRRTAEAGKLLRVVQERLETGERFVAVLREQREEYKALHEHHTECLEENRRLRASIERLETERMSLLERTEKSRVEFLALVAEKGRSDKQARDALQRLAEAESQQERSTQALKLHAQDLEERLAKKEEQVRSLRGELEAAIVRAEAAEREFSRLRSSLSLASGPADFAAGFPAFSSEEASTVAASEEHSKHAKEAQLQLVLLLAECAEESLRMSAQREKQLSREVTELERQLDRALQTMDEASEQAEALLADHEAAGAVYIQPAYTAGETLFWTSQQLLDVLQNRANWADLARGLEQRELELEARLLFAHQQNDGLHDEARRLETRLQKSEQRTLWIASQFLALMDRGNSEAEDSCESKEEDAQFAQQMSSVRESEARRQRSLLEEEKMETERAALLQRLARESSRASATEQANWHLESRVEDLRVALAEITAERDSVSAELAEEKATARDLAERLQVSEAALERLKKREREAVSRDFFCGSEADSHAVGAAEGSGRSPTHLESLVQQRDELQEMCQELAQRLEAMTRGMTRQQEERAANEERVERETRELHARWKRAASDCESLAQQKAELETQLQDLSENCAAAEVAYRDLEKKWMEEREAHNRLDDEDRRSGREVRLSRRERRLARRRRGGVSDEEARPRDGASSLQSSLSSLSPFEEDGSELARRRPAAEEAVERETNLKKELEAAHQQKNEAEEMCKELGTQLAVLTTLLEAATKEKEDLVAAANRGHKGPVSEQESPSEEKSDLRRDNGDSELVESREALLEKLHAREEELGEARRALLLEKETKAQLEEQLAVETRKREMQHQASEEAKEREEREREEKARQAADLAADLARANSELTSMREKLAASEVARAALEKAEVAREETTKLSLQQQSEKEEMRQMAAAEVADLRNTLASTQEELATLRGRLQEWEATATTPGRLAEELQELRRVVDFQEVEKQQLLESLREWEEKEEEHQAAMKEFEGSYVALQREAFDARAQLQRMIRVVEEHKRRRLRALQEKKRGAGGASQQEEKSAGEGASEETGSDFGEAGEASAEATPRGLEAAVSEVELQAAEDHDILVGRVEELERMQTELEEQRRMLTKHLQQTTEKLQEQCQTTSELQTRCVQLADALEKARAYGATEKHGETPGACESGEETLRQRLASAEEELDRLRREKEELASREETARGQEQAFEVELAKARREAEDKAEIHISEIQQFYEALQAKMERAHAEAENALTTEVQALRSEVQRLKALAAAQTEPTLDQRQDEFEREREKELEREKELERVVAELEREREEKARREAAHEREVAKTRQEAEAAAEMRVSEIQDFFQKLQDHMTQSHAQAKSELLARVAVLEKEVADLREQTPKEQRESGTFQLEVKEIGRKEDEMEDAEVERMGAKQSGDKQTAYYEFERSVGEAEPASRAHEESPEAEGRLERSAEAFEDAAASPQESPFYACSPCSSFSSVREFPEELAAEDENGLAETLRREVEQLHAQCRTLRERVAALEKAAEDKGNLLAKTEDEKRDVEEQLRQTVARVKDQADRLARMSQQCSMRGQELQDLQRREVQLRRQVEEQEEKQREQNARMLQQNEERHEALLAKHSAEQRLTLQREQLAGEERRRQAAEAHAEELLERLETVQKKLLESENEKAQVSLSEARLREELDRVQMAHERERERERQAERAREEKQQRRVEGLQRAKRETDDRLAELLGRAEEQEDRVRTLERQEALLRREVAEQKTQLSLREKELEEQKASREDAKKEFAAALARQETRHEQFLHARLEEERARAEEDVMTLRGLLNEQRDAQKQMETNFRRQLERQVQAARQLDASLQECEDEEEKRVEKFNATTRELQAVVERYNATLEELTAVSEERDNLRLKLAELQSEVSEIRREARDLQAAHLEKEERDRRQWEAAENLQSELEKEVRRLTEERSHALERERREREELERMHREADAARAEEARERLREREEWEARCREKEEMAAEKASLLESCEKRLGQLQEETRRREEAAQRREDEREKEREKRLRDYEGEVHELHLKLHQRRIQEEEKLHEIREKQRDLEHELFSTQQKLQVAQRHREEAEAAAAAAERARTLCEGLLAEERGAAKKAREEQNALAEQVKRLDRENEEKSRKLQDQQLKFSQHLAVAAEESEAKEAEKQREAATINALRDEVQSMQEQLNKEKGEVSSLRRELVNAKAAHADAVERQGEAEKTRDENQQQVSRLKTTLEEVERRLQSIKTQLTETQEKLEGERERVRAAEDRQIQLERYIKELEAQERDAREAGAAATRAKEQALQEERDRSDDDRMRLLAELRRCEEEKRRVEDELQARKAEQEAERERLEVELQRREEEILGLQEECDRRREETIGEMAANREEQEALRGELKHLKDRVDHGEAKAAALTQHLEAAESEKRHVQRELESRGEELEQLRIAKSRVETDFSRLKMEVEAERERNQSQRTFWEQVVDGSHKRQQELQELLDQREAKSEAAETAWRAKTESLQATVATLEEKLKEKERHLSSLEKELADTRESLGRSCSAVTAELHAKERSYEAQVAQLQEESRSIKRALESALADCRRQAEAHEQMLRETLGETQNQAQSLQRQLELSRAELTGRERAWQSAEQQSREETTVLRNRCGALEAELRVQETRAQGLEQENRQLHAREEATRQELEGVLQREAEMQRRFQQTWTEAHMSTEELLVQLQREEQKNRLELRMAEQRMQELQQIREREVTEWARERSRLQADCEKRQRDAADASKQLAEAQLAAALAKEELCRVQDELTVLRVKDEALQRQFLSLAASSSGVLGSTGVSLSGGREKGRNNLSHDEAHAAERAETSLASVRTLTEQRCQALEAALKTASESRDRNAQHCASLRRELAELTRDVQREKEEGEMKTSELEKAHRRIEKLLAVQEETRAQAAELHRRCREYQVKVEEMLREREREERRRDDPGDEERRSRSVARASAEGRNDATEEAGNRGERSSRVPQTRFQNEGFAASERAAHAEETDSLQGSRASLLARQSLAFQKQTEMLQAVIEELGRKLQNQQEQQLLLLTHGHRSAEAAREEREREERERERRVRLLEQRCQDGEIEREALKAELQRAELGSSEAQKQKEDVEREVRRLQILSENLQRRLSKVEAERDSQESAERRSEREQTQREQELLEALQERDIQQRVQESYLERIRGAVEELKAALKQTRREKDASEHRVLLLRRQIEETTALQRERDGAFALLQREVDEAREGREKLEAEVESEKAKRQKVELQKDDLEKTFELDRAALDEECRALQSSLETLRGRLQVQEETKRLVEAEAQRWASQCRETQAALGEEREKGELQEKERGEERRKLLGQLEDEREARARLEQRCADLEKERQREQEERARETERQQEEIERFKARLAESRTAWEDRCRDLNDDLIQVRRQWRETQADLEKALRGQEEETRQREEAERERDAETRRAAEAIAAVARLQAERRTEQATDAAERQQKATLSGKQGEEREARQEEQALKRHELAVSGTREGEELERLKKTLQAVIDNRDRLQSEWLHLRQESEASRSDLTAARNRCLQLEEQVRSVTQELRDCQRALRAADSEKTTQTEKLDRLHMSLERERRAREETLDRLVGLEREVSRMQREKEESMHRLHTAERERESLALSLTALRERERQSRRASGDEAEMERGWQAEKAESLVYLETLEKQLKATEASLARIREDRDRMQRALVDAEERLAEELERTRRRERGEDPRVSDSSPSEAVTTLAAEVDHTQRMLEQARERTAALEKELAASYRQRETDSERVALLRAQLEAQRRSVEDADAAKEKLSSRLEECMRQEAFATAALEAERKLNSRLKEQCLQMETELAETGRRRLRAEADATQGEARLRDVESLLHTAREQLQARTEQEDRLREELERQEEEMAALKATRDEQQLVVERLERQLQTEQQLREREQQLQEREKKLRERESAEVSETDRLVREIQHEAEREKRELMKALEERDDRLRHLEAEVQATRRDLAETRERGKQERSVEEEKLRKRLSYLKEVQERTAQENDEKSRRLRQFEQADATLRSELQEREERLVALERARAALEAKLAETEEVVVSLRREVASSRKKLENERERSGVLRYEEEALRTQIKETEKVQRENEALKESLQTQRAQLHALEKRTRQRDQENQSLETKVASLQKEVRRLNEAYAAQVEKLKKDAERLYSELEQSETQRVSAQDASVELEAQLAAGATRWRASEARLEKAERALEDFRRRQQQGRSHLTRTQAILEGLLTVPLLPPTSPSSSSSSALANEDKKPREVVSPSASREEALLTLAEKLREERRDAVASIREREGARRRSLASLGQELEEERWQVKQLQELLKEVDSARKEALEQETLQTREIDKLRSALAKAAVASEERERTLLRLEEKLAEERRGRQALAEELQRQRSSSSAVSRDGGREETSENCFEKTSASDREAARLRADEGLARDQTLREKEADCAELQQHLERLRGKVAELREGKRALERQVGRLDSKLHAAQEEKTQLTEALEAAAKEKRDLERKAAGSATHARDLQTECLALQRQLEEVAERQALARSQSQGADEERQRLEETVAETVGRAKRAEEAVEELTGEIQGLRRERQRLQEALGRKERTEKKLENAVQALEERLSRMHRQSASEGYEGGEGGRGEGSEPAALPTLEARLQRATEESERQARAQRALEEELFESKKLHAEERERLVQENLELNERVAYLQSRCRHLEADLDALRRTAENVQARLADRAEAETVGETKPEERVDLRKELEAANRARERLEREERRLQAHLEDSQKALAVQKRRQEDQEEMVAGLKSRVEEVQKTLRKREEELAVALARLTGKESELECAANEVKDLQKAAESVQSRLSSLEETKRQLEEKNNLLQAQVDRQHRVLSGLRGNVEASVEHNGETGEGEHASTARQERRAREELENDLRRLDEVCEQLQREKSQQESVAKAKTRELDALQRSFKLEVCALQEDAAKLQAMRAGLESQCEEAQQTVREMEERVRELTRENHLLQRALERAEEECSQWKARMRASRSDVSETRETSDEGQEGPDLARRQCTRARRDGEAADAPGEVQREEDTGRTQALRQWIDRLEEKLQKAEREEQGLKRELNGATRRAEELQRALEQGVEKFDELVARNEELKRKWAEDRCSWAAQRKREVEEHNKEATQLREECMALEKENRVFQQELDRQAGDLKTLHEKALRLADRNAHLQAELAKQQDAASAVAPLEKEISALQEEMEMREAAARDTEADLEAYRLKNRELEAEVASLWRQIAEERGERELVESDNVMLASHQNRDQKLRYTEVLKKQLDSERSARLRLQRDANRLRVETFSLRPLLRLLAGETVGDILVKDFGRGGGSEKKDSLQASRGVAGTSLAASILDASQNSAAAVLSASRRILRCSRPGLRHSRSVSIGRRGGAVLPARSLSLSARSEKPTVALAVRDRVGDAFPVYRQLRVLHRSLSFVMNEFISFLALLQDVLKDEDLLDRLLGVLPAASTFVVSALPPSQGRQDLPPQLSHADAEDLPGLSLSQLDEGRPTETLEARRHQFFSLVSALKQQLRVKLVAHPAASVPSVSVSPSAHGLAASSSPYSPIPGGKRGDGSQGEASRRQRQLSLLAEPRGLAGDSTHRGELPLATLEEDVQGEASGAPSGSLSLDPLAGSSLVVSAREQRDENVSTLSRFSRSRRPEEQGESRRGDAGVSRAGLRSAVSRYEETSREWNPRSSFSLSPSASPGNSNRRLDGSLSEEEQRTEERSSGPGRPAFLQPKGSGAGTAGSGVEERKGEERRSLEESRNTIASSLFSSFASVSSFFESRTGDN</sequence>
<keyword id="KW-0131">Cell cycle</keyword>
<keyword id="KW-0132">Cell division</keyword>
<keyword id="KW-0175">Coiled coil</keyword>
<keyword id="KW-0963">Cytoplasm</keyword>
<keyword id="KW-0206">Cytoskeleton</keyword>
<keyword id="KW-1185">Reference proteome</keyword>
<protein>
    <recommendedName>
        <fullName evidence="6">Centrosome-associated protein CEP250</fullName>
        <shortName evidence="4 5">TgCEP250</shortName>
    </recommendedName>
</protein>
<accession>S8GH32</accession>
<proteinExistence type="evidence at protein level"/>
<gene>
    <name evidence="4" type="primary">CEP250</name>
    <name evidence="7" type="ORF">TGME49_212880</name>
</gene>
<feature type="chain" id="PRO_0000462218" description="Centrosome-associated protein CEP250">
    <location>
        <begin position="1"/>
        <end position="6668"/>
    </location>
</feature>
<feature type="coiled-coil region" evidence="1">
    <location>
        <begin position="562"/>
        <end position="589"/>
    </location>
</feature>
<feature type="coiled-coil region" evidence="1">
    <location>
        <begin position="632"/>
        <end position="666"/>
    </location>
</feature>
<feature type="coiled-coil region" evidence="1">
    <location>
        <begin position="873"/>
        <end position="988"/>
    </location>
</feature>
<feature type="coiled-coil region" evidence="1">
    <location>
        <begin position="1042"/>
        <end position="1087"/>
    </location>
</feature>
<feature type="coiled-coil region" evidence="1">
    <location>
        <begin position="1252"/>
        <end position="1307"/>
    </location>
</feature>
<feature type="coiled-coil region" evidence="1">
    <location>
        <begin position="1333"/>
        <end position="1427"/>
    </location>
</feature>
<feature type="coiled-coil region" evidence="1">
    <location>
        <begin position="1501"/>
        <end position="1538"/>
    </location>
</feature>
<feature type="coiled-coil region" evidence="1">
    <location>
        <begin position="1594"/>
        <end position="1688"/>
    </location>
</feature>
<feature type="coiled-coil region" evidence="1">
    <location>
        <begin position="1896"/>
        <end position="1930"/>
    </location>
</feature>
<feature type="coiled-coil region" evidence="1">
    <location>
        <begin position="1975"/>
        <end position="2224"/>
    </location>
</feature>
<feature type="coiled-coil region" evidence="1">
    <location>
        <begin position="2298"/>
        <end position="3272"/>
    </location>
</feature>
<feature type="coiled-coil region" evidence="1">
    <location>
        <begin position="3298"/>
        <end position="3436"/>
    </location>
</feature>
<feature type="coiled-coil region" evidence="1">
    <location>
        <begin position="3526"/>
        <end position="3599"/>
    </location>
</feature>
<feature type="coiled-coil region" evidence="1">
    <location>
        <begin position="3697"/>
        <end position="3773"/>
    </location>
</feature>
<feature type="coiled-coil region" evidence="1">
    <location>
        <begin position="3856"/>
        <end position="4137"/>
    </location>
</feature>
<feature type="coiled-coil region" evidence="1">
    <location>
        <begin position="4170"/>
        <end position="4486"/>
    </location>
</feature>
<feature type="coiled-coil region" evidence="1">
    <location>
        <begin position="4515"/>
        <end position="5078"/>
    </location>
</feature>
<feature type="coiled-coil region" evidence="1">
    <location>
        <begin position="5165"/>
        <end position="5202"/>
    </location>
</feature>
<feature type="coiled-coil region" evidence="1">
    <location>
        <begin position="5298"/>
        <end position="5731"/>
    </location>
</feature>
<feature type="coiled-coil region" evidence="1">
    <location>
        <begin position="5927"/>
        <end position="6119"/>
    </location>
</feature>
<evidence type="ECO:0000255" key="1"/>
<evidence type="ECO:0000269" key="2">
    <source>
    </source>
</evidence>
<evidence type="ECO:0000269" key="3">
    <source>
    </source>
</evidence>
<evidence type="ECO:0000303" key="4">
    <source>
    </source>
</evidence>
<evidence type="ECO:0000303" key="5">
    <source>
    </source>
</evidence>
<evidence type="ECO:0000305" key="6"/>
<evidence type="ECO:0000312" key="7">
    <source>
        <dbReference type="EMBL" id="EPT31185.1"/>
    </source>
</evidence>
<evidence type="ECO:0000312" key="8">
    <source>
        <dbReference type="Proteomes" id="UP000001529"/>
    </source>
</evidence>